<proteinExistence type="evidence at protein level"/>
<sequence>MSRGKLEDMEQKETSEVDWIICFALIQSRNPTLWKRALSRKKGDVEDVGALKSEKNLKINPRENSKHIYKWVAPFENGFLNNKSLFAHLEPIYNFLCQNKYKSFEDAVGLKELQSFSKDVSTADINNWFLPRYKILLKILSLKTKEIDFRGLSQVFQTLQILLVSHYSHRIDSDSSFKRTLIDVHVFNFIAKFLFNRILLKKNQNDPKWLQNFYDQGDGKHLCDKVDYKRLCSLHFTLIYSIINIQLIKIKTNQTFEPQILKYVSVLKLIEHILIIIESLIHVLIRFVSKHKLICINRKKAYCRVYLERELSLKKTYLKNFYSVISGVPEKELGGLLKILKIVILSLLETFESIEWQHLKPFLEKFPAHEISLQKKRKYIQAALLITAERNLIARFRLSRWFNETENI</sequence>
<organism>
    <name type="scientific">Saccharomyces cerevisiae (strain ATCC 204508 / S288c)</name>
    <name type="common">Baker's yeast</name>
    <dbReference type="NCBI Taxonomy" id="559292"/>
    <lineage>
        <taxon>Eukaryota</taxon>
        <taxon>Fungi</taxon>
        <taxon>Dikarya</taxon>
        <taxon>Ascomycota</taxon>
        <taxon>Saccharomycotina</taxon>
        <taxon>Saccharomycetes</taxon>
        <taxon>Saccharomycetales</taxon>
        <taxon>Saccharomycetaceae</taxon>
        <taxon>Saccharomyces</taxon>
    </lineage>
</organism>
<evidence type="ECO:0000269" key="1">
    <source>
    </source>
</evidence>
<evidence type="ECO:0000269" key="2">
    <source>
    </source>
</evidence>
<evidence type="ECO:0000305" key="3"/>
<keyword id="KW-0158">Chromosome</keyword>
<keyword id="KW-0233">DNA recombination</keyword>
<keyword id="KW-0469">Meiosis</keyword>
<keyword id="KW-0539">Nucleus</keyword>
<keyword id="KW-1185">Reference proteome</keyword>
<keyword id="KW-0749">Sporulation</keyword>
<comment type="function">
    <text evidence="2">Required for meiotic induction of recombination, viable spore production and chromosome synapsis. Component of the MER2-MEI4-REC114 complex which seems to be required for meiotic double-strand break (DSB) formation.</text>
</comment>
<comment type="subunit">
    <text evidence="1 2">Interacts with MER2 and REC114. Component of the MER2-MEI4-REC114 complex.</text>
</comment>
<comment type="interaction">
    <interactant intactId="EBI-2566907">
        <id>P29467</id>
    </interactant>
    <interactant intactId="EBI-16412992">
        <id>P33323</id>
        <label>REC104</label>
    </interactant>
    <organismsDiffer>false</organismsDiffer>
    <experiments>5</experiments>
</comment>
<comment type="interaction">
    <interactant intactId="EBI-2566907">
        <id>P29467</id>
    </interactant>
    <interactant intactId="EBI-10742">
        <id>P21651</id>
        <label>REC107</label>
    </interactant>
    <organismsDiffer>false</organismsDiffer>
    <experiments>7</experiments>
</comment>
<comment type="interaction">
    <interactant intactId="EBI-2566907">
        <id>P29467</id>
    </interactant>
    <interactant intactId="EBI-14447">
        <id>P32841</id>
        <label>REC114</label>
    </interactant>
    <organismsDiffer>false</organismsDiffer>
    <experiments>8</experiments>
</comment>
<comment type="subcellular location">
    <subcellularLocation>
        <location evidence="2">Nucleus</location>
    </subcellularLocation>
    <subcellularLocation>
        <location evidence="2">Chromosome</location>
    </subcellularLocation>
    <text>Localizes to chromosomes.</text>
</comment>
<comment type="developmental stage">
    <text>Expressed only in meiosis.</text>
</comment>
<comment type="similarity">
    <text evidence="3">Belongs to the MEI4L family.</text>
</comment>
<dbReference type="EMBL" id="M84764">
    <property type="status" value="NOT_ANNOTATED_CDS"/>
    <property type="molecule type" value="mRNA"/>
</dbReference>
<dbReference type="EMBL" id="M84765">
    <property type="status" value="NOT_ANNOTATED_CDS"/>
    <property type="molecule type" value="Genomic_DNA"/>
</dbReference>
<dbReference type="EMBL" id="U18796">
    <property type="protein sequence ID" value="AAB64589.1"/>
    <property type="molecule type" value="Genomic_DNA"/>
</dbReference>
<dbReference type="EMBL" id="BK006939">
    <property type="protein sequence ID" value="DAA07699.1"/>
    <property type="molecule type" value="Genomic_DNA"/>
</dbReference>
<dbReference type="PIR" id="S78084">
    <property type="entry name" value="S78084"/>
</dbReference>
<dbReference type="RefSeq" id="NP_010963.1">
    <property type="nucleotide sequence ID" value="NM_001180023.1"/>
</dbReference>
<dbReference type="SMR" id="P29467"/>
<dbReference type="BioGRID" id="36781">
    <property type="interactions" value="50"/>
</dbReference>
<dbReference type="ComplexPortal" id="CPX-1809">
    <property type="entry name" value="MER2-MEI4-REC114 meiotic recombination initiation complex"/>
</dbReference>
<dbReference type="FunCoup" id="P29467">
    <property type="interactions" value="37"/>
</dbReference>
<dbReference type="IntAct" id="P29467">
    <property type="interactions" value="5"/>
</dbReference>
<dbReference type="STRING" id="4932.YER044C-A"/>
<dbReference type="iPTMnet" id="P29467"/>
<dbReference type="PaxDb" id="4932-YER044C-A"/>
<dbReference type="PeptideAtlas" id="P29467"/>
<dbReference type="EnsemblFungi" id="YER044C-A_mRNA">
    <property type="protein sequence ID" value="YER044C-A"/>
    <property type="gene ID" value="YER044C-A"/>
</dbReference>
<dbReference type="GeneID" id="856768"/>
<dbReference type="KEGG" id="sce:YER044C-A"/>
<dbReference type="AGR" id="SGD:S000001954"/>
<dbReference type="SGD" id="S000001954">
    <property type="gene designation" value="MEI4"/>
</dbReference>
<dbReference type="VEuPathDB" id="FungiDB:YER044C-A"/>
<dbReference type="eggNOG" id="ENOG502S67C">
    <property type="taxonomic scope" value="Eukaryota"/>
</dbReference>
<dbReference type="HOGENOM" id="CLU_061029_0_0_1"/>
<dbReference type="InParanoid" id="P29467"/>
<dbReference type="OMA" id="YRKFIQC"/>
<dbReference type="OrthoDB" id="4055114at2759"/>
<dbReference type="BioCyc" id="YEAST:G3O-30346-MONOMER"/>
<dbReference type="BioGRID-ORCS" id="856768">
    <property type="hits" value="0 hits in 10 CRISPR screens"/>
</dbReference>
<dbReference type="PRO" id="PR:P29467"/>
<dbReference type="Proteomes" id="UP000002311">
    <property type="component" value="Chromosome V"/>
</dbReference>
<dbReference type="RNAct" id="P29467">
    <property type="molecule type" value="protein"/>
</dbReference>
<dbReference type="GO" id="GO:0000794">
    <property type="term" value="C:condensed nuclear chromosome"/>
    <property type="evidence" value="ECO:0000314"/>
    <property type="project" value="SGD"/>
</dbReference>
<dbReference type="GO" id="GO:0005634">
    <property type="term" value="C:nucleus"/>
    <property type="evidence" value="ECO:0000303"/>
    <property type="project" value="ComplexPortal"/>
</dbReference>
<dbReference type="GO" id="GO:0006310">
    <property type="term" value="P:DNA recombination"/>
    <property type="evidence" value="ECO:0007669"/>
    <property type="project" value="UniProtKB-KW"/>
</dbReference>
<dbReference type="GO" id="GO:0042138">
    <property type="term" value="P:meiotic DNA double-strand break formation"/>
    <property type="evidence" value="ECO:0000316"/>
    <property type="project" value="SGD"/>
</dbReference>
<dbReference type="GO" id="GO:0030435">
    <property type="term" value="P:sporulation resulting in formation of a cellular spore"/>
    <property type="evidence" value="ECO:0007669"/>
    <property type="project" value="UniProtKB-KW"/>
</dbReference>
<dbReference type="InterPro" id="IPR025888">
    <property type="entry name" value="MEI4"/>
</dbReference>
<dbReference type="Pfam" id="PF13971">
    <property type="entry name" value="Mei4"/>
    <property type="match status" value="1"/>
</dbReference>
<gene>
    <name type="primary">MEI4</name>
    <name type="ordered locus">YER044C-A</name>
    <name type="ORF">YER044BC</name>
</gene>
<feature type="chain" id="PRO_0000096402" description="Meiosis-specific protein MEI4">
    <location>
        <begin position="1"/>
        <end position="408"/>
    </location>
</feature>
<feature type="sequence conflict" description="In Ref. 1; M84764." evidence="3" ref="1">
    <original>P</original>
    <variation>T</variation>
    <location>
        <position position="329"/>
    </location>
</feature>
<name>MEI4_YEAST</name>
<protein>
    <recommendedName>
        <fullName>Meiosis-specific protein MEI4</fullName>
    </recommendedName>
</protein>
<reference key="1">
    <citation type="journal article" date="1992" name="Mol. Cell. Biol.">
        <title>MEI4, a meiosis-specific yeast gene required for chromosome synapsis.</title>
        <authorList>
            <person name="Menees T.M."/>
            <person name="Ross-Macdonald P.B."/>
            <person name="Roeder G.S."/>
        </authorList>
    </citation>
    <scope>NUCLEOTIDE SEQUENCE [MRNA]</scope>
    <source>
        <strain>ATCC 204508 / S288c</strain>
    </source>
</reference>
<reference key="2">
    <citation type="journal article" date="1997" name="Nature">
        <title>The nucleotide sequence of Saccharomyces cerevisiae chromosome V.</title>
        <authorList>
            <person name="Dietrich F.S."/>
            <person name="Mulligan J.T."/>
            <person name="Hennessy K.M."/>
            <person name="Yelton M.A."/>
            <person name="Allen E."/>
            <person name="Araujo R."/>
            <person name="Aviles E."/>
            <person name="Berno A."/>
            <person name="Brennan T."/>
            <person name="Carpenter J."/>
            <person name="Chen E."/>
            <person name="Cherry J.M."/>
            <person name="Chung E."/>
            <person name="Duncan M."/>
            <person name="Guzman E."/>
            <person name="Hartzell G."/>
            <person name="Hunicke-Smith S."/>
            <person name="Hyman R.W."/>
            <person name="Kayser A."/>
            <person name="Komp C."/>
            <person name="Lashkari D."/>
            <person name="Lew H."/>
            <person name="Lin D."/>
            <person name="Mosedale D."/>
            <person name="Nakahara K."/>
            <person name="Namath A."/>
            <person name="Norgren R."/>
            <person name="Oefner P."/>
            <person name="Oh C."/>
            <person name="Petel F.X."/>
            <person name="Roberts D."/>
            <person name="Sehl P."/>
            <person name="Schramm S."/>
            <person name="Shogren T."/>
            <person name="Smith V."/>
            <person name="Taylor P."/>
            <person name="Wei Y."/>
            <person name="Botstein D."/>
            <person name="Davis R.W."/>
        </authorList>
    </citation>
    <scope>NUCLEOTIDE SEQUENCE [LARGE SCALE GENOMIC DNA]</scope>
    <source>
        <strain>ATCC 204508 / S288c</strain>
    </source>
</reference>
<reference key="3">
    <citation type="journal article" date="2014" name="G3 (Bethesda)">
        <title>The reference genome sequence of Saccharomyces cerevisiae: Then and now.</title>
        <authorList>
            <person name="Engel S.R."/>
            <person name="Dietrich F.S."/>
            <person name="Fisk D.G."/>
            <person name="Binkley G."/>
            <person name="Balakrishnan R."/>
            <person name="Costanzo M.C."/>
            <person name="Dwight S.S."/>
            <person name="Hitz B.C."/>
            <person name="Karra K."/>
            <person name="Nash R.S."/>
            <person name="Weng S."/>
            <person name="Wong E.D."/>
            <person name="Lloyd P."/>
            <person name="Skrzypek M.S."/>
            <person name="Miyasato S.R."/>
            <person name="Simison M."/>
            <person name="Cherry J.M."/>
        </authorList>
    </citation>
    <scope>GENOME REANNOTATION</scope>
    <source>
        <strain>ATCC 204508 / S288c</strain>
    </source>
</reference>
<reference key="4">
    <citation type="journal article" date="2004" name="Mol. Cell">
        <title>Antiviral protein Ski8 is a direct partner of Spo11 in meiotic DNA break formation, independent of its cytoplasmic role in RNA metabolism.</title>
        <authorList>
            <person name="Arora C."/>
            <person name="Kee K."/>
            <person name="Maleki S."/>
            <person name="Keeney S."/>
        </authorList>
    </citation>
    <scope>INTERACTION WITH MER2 AND REC114</scope>
</reference>
<reference key="5">
    <citation type="journal article" date="2006" name="Genetics">
        <title>Saccharomyces cerevisiae Mer2, Mei4 and Rec114 form a complex required for meiotic double-strand break formation.</title>
        <authorList>
            <person name="Li J."/>
            <person name="Hooker G.W."/>
            <person name="Roeder G.S."/>
        </authorList>
    </citation>
    <scope>IDENTIFICATION IN THE MER2-MEI4-REC114 COMPLEX</scope>
    <scope>FUNCTION OF THE MER2-MEI4-REC114 COMPLEX</scope>
    <scope>INTERACTION WITH MER2 AND REC114</scope>
    <scope>SUBCELLULAR LOCATION</scope>
</reference>
<accession>P29467</accession>
<accession>D3DLU5</accession>
<accession>P87265</accession>